<organism>
    <name type="scientific">Prochlorococcus marinus (strain MIT 9515)</name>
    <dbReference type="NCBI Taxonomy" id="167542"/>
    <lineage>
        <taxon>Bacteria</taxon>
        <taxon>Bacillati</taxon>
        <taxon>Cyanobacteriota</taxon>
        <taxon>Cyanophyceae</taxon>
        <taxon>Synechococcales</taxon>
        <taxon>Prochlorococcaceae</taxon>
        <taxon>Prochlorococcus</taxon>
    </lineage>
</organism>
<sequence length="125" mass="13892">MPTISQLIGSERKRLTRKTKSPALKSCPERRGVCTRVYTSTPKKPNSALRKVARVRLTSGFEVTAYIPGIGHNLQEHSVVLLRGGRVKDLPGVRYHIIRGTLDTAGVKDRRQSRSKYGAKAPKNN</sequence>
<keyword id="KW-0488">Methylation</keyword>
<keyword id="KW-0687">Ribonucleoprotein</keyword>
<keyword id="KW-0689">Ribosomal protein</keyword>
<keyword id="KW-0694">RNA-binding</keyword>
<keyword id="KW-0699">rRNA-binding</keyword>
<keyword id="KW-0820">tRNA-binding</keyword>
<reference key="1">
    <citation type="journal article" date="2007" name="PLoS Genet.">
        <title>Patterns and implications of gene gain and loss in the evolution of Prochlorococcus.</title>
        <authorList>
            <person name="Kettler G.C."/>
            <person name="Martiny A.C."/>
            <person name="Huang K."/>
            <person name="Zucker J."/>
            <person name="Coleman M.L."/>
            <person name="Rodrigue S."/>
            <person name="Chen F."/>
            <person name="Lapidus A."/>
            <person name="Ferriera S."/>
            <person name="Johnson J."/>
            <person name="Steglich C."/>
            <person name="Church G.M."/>
            <person name="Richardson P."/>
            <person name="Chisholm S.W."/>
        </authorList>
    </citation>
    <scope>NUCLEOTIDE SEQUENCE [LARGE SCALE GENOMIC DNA]</scope>
    <source>
        <strain>MIT 9515</strain>
    </source>
</reference>
<name>RS12_PROM5</name>
<protein>
    <recommendedName>
        <fullName evidence="2">Small ribosomal subunit protein uS12</fullName>
    </recommendedName>
    <alternativeName>
        <fullName evidence="4">30S ribosomal protein S12</fullName>
    </alternativeName>
</protein>
<comment type="function">
    <text evidence="2">With S4 and S5 plays an important role in translational accuracy.</text>
</comment>
<comment type="function">
    <text evidence="2">Interacts with and stabilizes bases of the 16S rRNA that are involved in tRNA selection in the A site and with the mRNA backbone. Located at the interface of the 30S and 50S subunits, it traverses the body of the 30S subunit contacting proteins on the other side and probably holding the rRNA structure together. The combined cluster of proteins S8, S12 and S17 appears to hold together the shoulder and platform of the 30S subunit.</text>
</comment>
<comment type="subunit">
    <text evidence="2">Part of the 30S ribosomal subunit. Contacts proteins S8 and S17. May interact with IF1 in the 30S initiation complex.</text>
</comment>
<comment type="similarity">
    <text evidence="2">Belongs to the universal ribosomal protein uS12 family.</text>
</comment>
<gene>
    <name evidence="2" type="primary">rpsL</name>
    <name evidence="2" type="synonym">rps12</name>
    <name type="ordered locus">P9515_16911</name>
</gene>
<feature type="chain" id="PRO_0000296016" description="Small ribosomal subunit protein uS12">
    <location>
        <begin position="1"/>
        <end position="125"/>
    </location>
</feature>
<feature type="region of interest" description="Disordered" evidence="3">
    <location>
        <begin position="1"/>
        <end position="28"/>
    </location>
</feature>
<feature type="region of interest" description="Disordered" evidence="3">
    <location>
        <begin position="104"/>
        <end position="125"/>
    </location>
</feature>
<feature type="modified residue" description="3-methylthioaspartic acid" evidence="1">
    <location>
        <position position="89"/>
    </location>
</feature>
<accession>A2BYN7</accession>
<proteinExistence type="inferred from homology"/>
<dbReference type="EMBL" id="CP000552">
    <property type="protein sequence ID" value="ABM72898.1"/>
    <property type="molecule type" value="Genomic_DNA"/>
</dbReference>
<dbReference type="RefSeq" id="WP_011820990.1">
    <property type="nucleotide sequence ID" value="NC_008817.1"/>
</dbReference>
<dbReference type="SMR" id="A2BYN7"/>
<dbReference type="STRING" id="167542.P9515_16911"/>
<dbReference type="GeneID" id="60201359"/>
<dbReference type="KEGG" id="pmc:P9515_16911"/>
<dbReference type="eggNOG" id="COG0048">
    <property type="taxonomic scope" value="Bacteria"/>
</dbReference>
<dbReference type="HOGENOM" id="CLU_104295_1_2_3"/>
<dbReference type="OrthoDB" id="9802366at2"/>
<dbReference type="Proteomes" id="UP000001589">
    <property type="component" value="Chromosome"/>
</dbReference>
<dbReference type="GO" id="GO:0015935">
    <property type="term" value="C:small ribosomal subunit"/>
    <property type="evidence" value="ECO:0007669"/>
    <property type="project" value="InterPro"/>
</dbReference>
<dbReference type="GO" id="GO:0019843">
    <property type="term" value="F:rRNA binding"/>
    <property type="evidence" value="ECO:0007669"/>
    <property type="project" value="UniProtKB-UniRule"/>
</dbReference>
<dbReference type="GO" id="GO:0003735">
    <property type="term" value="F:structural constituent of ribosome"/>
    <property type="evidence" value="ECO:0007669"/>
    <property type="project" value="InterPro"/>
</dbReference>
<dbReference type="GO" id="GO:0000049">
    <property type="term" value="F:tRNA binding"/>
    <property type="evidence" value="ECO:0007669"/>
    <property type="project" value="UniProtKB-UniRule"/>
</dbReference>
<dbReference type="GO" id="GO:0006412">
    <property type="term" value="P:translation"/>
    <property type="evidence" value="ECO:0007669"/>
    <property type="project" value="UniProtKB-UniRule"/>
</dbReference>
<dbReference type="CDD" id="cd03368">
    <property type="entry name" value="Ribosomal_S12"/>
    <property type="match status" value="1"/>
</dbReference>
<dbReference type="FunFam" id="2.40.50.140:FF:000001">
    <property type="entry name" value="30S ribosomal protein S12"/>
    <property type="match status" value="1"/>
</dbReference>
<dbReference type="Gene3D" id="2.40.50.140">
    <property type="entry name" value="Nucleic acid-binding proteins"/>
    <property type="match status" value="1"/>
</dbReference>
<dbReference type="HAMAP" id="MF_00403_B">
    <property type="entry name" value="Ribosomal_uS12_B"/>
    <property type="match status" value="1"/>
</dbReference>
<dbReference type="InterPro" id="IPR012340">
    <property type="entry name" value="NA-bd_OB-fold"/>
</dbReference>
<dbReference type="InterPro" id="IPR006032">
    <property type="entry name" value="Ribosomal_uS12"/>
</dbReference>
<dbReference type="InterPro" id="IPR005679">
    <property type="entry name" value="Ribosomal_uS12_bac"/>
</dbReference>
<dbReference type="NCBIfam" id="TIGR00981">
    <property type="entry name" value="rpsL_bact"/>
    <property type="match status" value="1"/>
</dbReference>
<dbReference type="PANTHER" id="PTHR11652">
    <property type="entry name" value="30S RIBOSOMAL PROTEIN S12 FAMILY MEMBER"/>
    <property type="match status" value="1"/>
</dbReference>
<dbReference type="Pfam" id="PF00164">
    <property type="entry name" value="Ribosom_S12_S23"/>
    <property type="match status" value="1"/>
</dbReference>
<dbReference type="PIRSF" id="PIRSF002133">
    <property type="entry name" value="Ribosomal_S12/S23"/>
    <property type="match status" value="1"/>
</dbReference>
<dbReference type="PRINTS" id="PR01034">
    <property type="entry name" value="RIBOSOMALS12"/>
</dbReference>
<dbReference type="SUPFAM" id="SSF50249">
    <property type="entry name" value="Nucleic acid-binding proteins"/>
    <property type="match status" value="1"/>
</dbReference>
<dbReference type="PROSITE" id="PS00055">
    <property type="entry name" value="RIBOSOMAL_S12"/>
    <property type="match status" value="1"/>
</dbReference>
<evidence type="ECO:0000250" key="1"/>
<evidence type="ECO:0000255" key="2">
    <source>
        <dbReference type="HAMAP-Rule" id="MF_00403"/>
    </source>
</evidence>
<evidence type="ECO:0000256" key="3">
    <source>
        <dbReference type="SAM" id="MobiDB-lite"/>
    </source>
</evidence>
<evidence type="ECO:0000305" key="4"/>